<keyword id="KW-0119">Carbohydrate metabolism</keyword>
<keyword id="KW-0136">Cellulose degradation</keyword>
<keyword id="KW-0326">Glycosidase</keyword>
<keyword id="KW-0378">Hydrolase</keyword>
<keyword id="KW-0624">Polysaccharide degradation</keyword>
<keyword id="KW-1185">Reference proteome</keyword>
<dbReference type="EC" id="3.2.1.21" evidence="4"/>
<dbReference type="EC" id="3.2.1.23" evidence="4"/>
<dbReference type="EC" id="3.2.1.37" evidence="4"/>
<dbReference type="EC" id="3.2.1.74" evidence="4"/>
<dbReference type="EC" id="3.2.1.91" evidence="4"/>
<dbReference type="EMBL" id="CP002216">
    <property type="protein sequence ID" value="ADQ03897.1"/>
    <property type="molecule type" value="Genomic_DNA"/>
</dbReference>
<dbReference type="RefSeq" id="WP_013411311.1">
    <property type="nucleotide sequence ID" value="NC_014657.1"/>
</dbReference>
<dbReference type="SMR" id="E4Q361"/>
<dbReference type="STRING" id="632518.Calow_0296"/>
<dbReference type="CAZy" id="GH1">
    <property type="family name" value="Glycoside Hydrolase Family 1"/>
</dbReference>
<dbReference type="KEGG" id="cow:Calow_0296"/>
<dbReference type="eggNOG" id="COG2723">
    <property type="taxonomic scope" value="Bacteria"/>
</dbReference>
<dbReference type="HOGENOM" id="CLU_001859_1_0_9"/>
<dbReference type="OrthoDB" id="2339329at2"/>
<dbReference type="UniPathway" id="UPA00350"/>
<dbReference type="UniPathway" id="UPA00696"/>
<dbReference type="Proteomes" id="UP000006889">
    <property type="component" value="Chromosome"/>
</dbReference>
<dbReference type="GO" id="GO:0005829">
    <property type="term" value="C:cytosol"/>
    <property type="evidence" value="ECO:0007669"/>
    <property type="project" value="TreeGrafter"/>
</dbReference>
<dbReference type="GO" id="GO:0004565">
    <property type="term" value="F:beta-galactosidase activity"/>
    <property type="evidence" value="ECO:0000314"/>
    <property type="project" value="UniProtKB"/>
</dbReference>
<dbReference type="GO" id="GO:0008422">
    <property type="term" value="F:beta-glucosidase activity"/>
    <property type="evidence" value="ECO:0000314"/>
    <property type="project" value="UniProtKB"/>
</dbReference>
<dbReference type="GO" id="GO:0016162">
    <property type="term" value="F:cellulose 1,4-beta-cellobiosidase activity"/>
    <property type="evidence" value="ECO:0000314"/>
    <property type="project" value="UniProtKB"/>
</dbReference>
<dbReference type="GO" id="GO:0031217">
    <property type="term" value="F:glucan 1,4-beta-glucosidase activity"/>
    <property type="evidence" value="ECO:0000314"/>
    <property type="project" value="UniProtKB"/>
</dbReference>
<dbReference type="GO" id="GO:0009044">
    <property type="term" value="F:xylan 1,4-beta-xylosidase activity"/>
    <property type="evidence" value="ECO:0000314"/>
    <property type="project" value="UniProtKB"/>
</dbReference>
<dbReference type="GO" id="GO:0030245">
    <property type="term" value="P:cellulose catabolic process"/>
    <property type="evidence" value="ECO:0000314"/>
    <property type="project" value="UniProtKB"/>
</dbReference>
<dbReference type="GO" id="GO:0009251">
    <property type="term" value="P:glucan catabolic process"/>
    <property type="evidence" value="ECO:0000314"/>
    <property type="project" value="UniProtKB"/>
</dbReference>
<dbReference type="GO" id="GO:0005990">
    <property type="term" value="P:lactose catabolic process"/>
    <property type="evidence" value="ECO:0000314"/>
    <property type="project" value="UniProtKB"/>
</dbReference>
<dbReference type="GO" id="GO:0070207">
    <property type="term" value="P:protein homotrimerization"/>
    <property type="evidence" value="ECO:0000314"/>
    <property type="project" value="UniProtKB"/>
</dbReference>
<dbReference type="GO" id="GO:0045493">
    <property type="term" value="P:xylan catabolic process"/>
    <property type="evidence" value="ECO:0000314"/>
    <property type="project" value="UniProtKB"/>
</dbReference>
<dbReference type="FunFam" id="3.20.20.80:FF:000004">
    <property type="entry name" value="Beta-glucosidase 6-phospho-beta-glucosidase"/>
    <property type="match status" value="1"/>
</dbReference>
<dbReference type="Gene3D" id="3.20.20.80">
    <property type="entry name" value="Glycosidases"/>
    <property type="match status" value="1"/>
</dbReference>
<dbReference type="InterPro" id="IPR001360">
    <property type="entry name" value="Glyco_hydro_1"/>
</dbReference>
<dbReference type="InterPro" id="IPR018120">
    <property type="entry name" value="Glyco_hydro_1_AS"/>
</dbReference>
<dbReference type="InterPro" id="IPR017736">
    <property type="entry name" value="Glyco_hydro_1_beta-glucosidase"/>
</dbReference>
<dbReference type="InterPro" id="IPR033132">
    <property type="entry name" value="Glyco_hydro_1_N_CS"/>
</dbReference>
<dbReference type="InterPro" id="IPR017853">
    <property type="entry name" value="Glycoside_hydrolase_SF"/>
</dbReference>
<dbReference type="NCBIfam" id="TIGR03356">
    <property type="entry name" value="BGL"/>
    <property type="match status" value="1"/>
</dbReference>
<dbReference type="PANTHER" id="PTHR10353">
    <property type="entry name" value="GLYCOSYL HYDROLASE"/>
    <property type="match status" value="1"/>
</dbReference>
<dbReference type="PANTHER" id="PTHR10353:SF36">
    <property type="entry name" value="LP05116P"/>
    <property type="match status" value="1"/>
</dbReference>
<dbReference type="Pfam" id="PF00232">
    <property type="entry name" value="Glyco_hydro_1"/>
    <property type="match status" value="1"/>
</dbReference>
<dbReference type="PRINTS" id="PR00131">
    <property type="entry name" value="GLHYDRLASE1"/>
</dbReference>
<dbReference type="SUPFAM" id="SSF51445">
    <property type="entry name" value="(Trans)glycosidases"/>
    <property type="match status" value="1"/>
</dbReference>
<dbReference type="PROSITE" id="PS00572">
    <property type="entry name" value="GLYCOSYL_HYDROL_F1_1"/>
    <property type="match status" value="1"/>
</dbReference>
<dbReference type="PROSITE" id="PS00653">
    <property type="entry name" value="GLYCOSYL_HYDROL_F1_2"/>
    <property type="match status" value="1"/>
</dbReference>
<name>GH1A_CALOW</name>
<feature type="chain" id="PRO_0000458491" description="Multifunctional glycoside hydrolase">
    <location>
        <begin position="1"/>
        <end position="452"/>
    </location>
</feature>
<feature type="active site" description="Proton donor" evidence="1">
    <location>
        <position position="163"/>
    </location>
</feature>
<feature type="active site" description="Nucleophile" evidence="1 3">
    <location>
        <position position="361"/>
    </location>
</feature>
<feature type="binding site" evidence="2">
    <location>
        <position position="17"/>
    </location>
    <ligand>
        <name>substrate</name>
    </ligand>
</feature>
<feature type="binding site" evidence="2">
    <location>
        <position position="118"/>
    </location>
    <ligand>
        <name>substrate</name>
    </ligand>
</feature>
<feature type="binding site" evidence="2">
    <location>
        <position position="162"/>
    </location>
    <ligand>
        <name>substrate</name>
    </ligand>
</feature>
<feature type="binding site" evidence="2">
    <location>
        <position position="303"/>
    </location>
    <ligand>
        <name>substrate</name>
    </ligand>
</feature>
<feature type="binding site" evidence="2">
    <location>
        <position position="407"/>
    </location>
    <ligand>
        <name>substrate</name>
    </ligand>
</feature>
<feature type="binding site" evidence="2">
    <location>
        <begin position="414"/>
        <end position="415"/>
    </location>
    <ligand>
        <name>substrate</name>
    </ligand>
</feature>
<proteinExistence type="evidence at protein level"/>
<comment type="function">
    <text evidence="4">Has high beta-D-glucosidase, exoglucanase, beta-D-xylosidase, beta-D-galactosidase, and transgalactosylation activities in vitro. Has a very broad substrate specificity with the highest activity with p-nitrophenyl beta-D-galactopyranoside (pNPGal) as substrate. Active with pNP-beta-D-glucopyranoside (pNPGlu), pNP-beta-D-cellobioside (pNPC), lactose, pNP-beta-D-xylopyranoside (pNPX) and cellobiose in the order of decreasing activity, respectively. Very low activity with soluble polysaccharides synanthrin and locust bean gum. Very low, but detectable activity with insoluble substrates such as cotton and filter paper. No activity with pNP-alpha-L-arabinofuranoside (pNPAr) or carboxymethylcellulose (CMC) as substrates. Synthesizes galactooligosaccharides (GalOS) from lactose. Hydrolyzes pretreated corn stover releasing both glucose and xylose. This multifunctional enzyme may provide C.owensensis the benefit of utilizing a wide variety of available carbon sources in its natural growing environment as the ability to convert a wide range of soluble oligosaccharides to monoses is required in order to assimilate them.</text>
</comment>
<comment type="catalytic activity">
    <reaction evidence="4">
        <text>Hydrolysis of terminal, non-reducing beta-D-glucosyl residues with release of beta-D-glucose.</text>
        <dbReference type="EC" id="3.2.1.21"/>
    </reaction>
</comment>
<comment type="catalytic activity">
    <reaction evidence="4">
        <text>Hydrolysis of terminal non-reducing beta-D-galactose residues in beta-D-galactosides.</text>
        <dbReference type="EC" id="3.2.1.23"/>
    </reaction>
</comment>
<comment type="catalytic activity">
    <reaction evidence="4">
        <text>Hydrolysis of (1-&gt;4)-beta-D-xylans, to remove successive D-xylose residues from the non-reducing termini.</text>
        <dbReference type="EC" id="3.2.1.37"/>
    </reaction>
</comment>
<comment type="catalytic activity">
    <reaction evidence="4">
        <text>Hydrolysis of (1-&gt;4)-linkages in (1-&gt;4)-beta-D-glucans, to remove successive glucose units.</text>
        <dbReference type="EC" id="3.2.1.74"/>
    </reaction>
</comment>
<comment type="catalytic activity">
    <reaction evidence="4">
        <text>Hydrolysis of (1-&gt;4)-beta-D-glucosidic linkages in cellulose and cellotetraose, releasing cellobiose from the non-reducing ends of the chains.</text>
        <dbReference type="EC" id="3.2.1.91"/>
    </reaction>
</comment>
<comment type="activity regulation">
    <text evidence="4">Slight activation by Mn(2+), Ni(2+) and K(+). Slight inhibition by Fe(3+), Zn(2+), Co(2+), Mg(2+), Cu(2+), Na(+) and NH4(+).</text>
</comment>
<comment type="biophysicochemical properties">
    <kinetics>
        <KM evidence="4">0.61 mM for p-nitrophenyl beta-D-galactopyranoside (pNPGal) (at pH 5.5 and 75 degrees Celsius)</KM>
        <KM evidence="4">1.52 mM for p-nitrophenyl beta-D-glucopyranoside (pNPGlu) (at pH 5.5 and 75 degrees Celsius)</KM>
        <KM evidence="4">0.87 mM for p-nitrophenyl beta-D-cellobioside (pNPC) (at pH 5.5 and 75 degrees Celsius)</KM>
        <KM evidence="4">7.18 mM for p-nitrophenyl beta-D-xylopyranoside (pNPX) (at pH 5.5 and 75 degrees Celsius)</KM>
        <KM evidence="4">15.65 mM for cellobiose (at pH 5.5 and 75 degrees Celsius)</KM>
        <Vmax evidence="4">5100.0 umol/min/mg enzyme with pNPGal as substrate (at pH 5.5 and 75 degrees Celsius)</Vmax>
        <Vmax evidence="4">4027.0 umol/min/mg enzyme with pNPGlu as substrate (at pH 5.5 and 75 degrees Celsius)</Vmax>
        <Vmax evidence="4">1065.0 umol/min/mg enzyme with pNPC as substrate (at pH 5.5 and 75 degrees Celsius)</Vmax>
        <Vmax evidence="4">736.0 umol/min/mg enzyme with pNPX as substrate (at pH 5.5 and 75 degrees Celsius)</Vmax>
        <Vmax evidence="4">2424.0 umol/min/mg enzyme with cellobiose as substrate (at pH 5.5 and 75 degrees Celsius)</Vmax>
        <text evidence="4">kcat is 4522 sec(-1) with pNPGal as substrate. kcat is 3750.6 sec(-1) with pNPGlu as substrate. kcat is 944.3 sec(-1) with pNPC as substrate. kcat is 652.6 sec(-1) with pNPX as substrate. kcat is 2149 sec(-1) with cellobiose as substrate.</text>
    </kinetics>
    <phDependence>
        <text evidence="4">Optimum pH is 5.5 using p-nitrophenyl beta-D-galactopyranoside (pNPGal) as substrate. Retains 80% of its maximal activity at pH 5.0 and 6.0, and 20% at pH 4.5 and 7.0.</text>
    </phDependence>
    <temperatureDependence>
        <text evidence="4">Optimum temperature is 75-85 degrees Celsius using p-nitrophenyl beta-D-galactopyranoside (pNPGal) as substrate. Retains 100% of its maximal activity after incubation at 75 or 65 degrees Celsius at pH 5.5 for 12 hours. Retains more than 80% of its maximal activity at 70 and 90 degrees Celsius and less than 50% below 60 degrees Celsius. Half-life is about 11 hours at 80 degrees Celsius and about 1.5 hours at 85 degrees Celsius.</text>
    </temperatureDependence>
</comment>
<comment type="pathway">
    <text evidence="4">Glycan metabolism; beta-D-glucan degradation.</text>
</comment>
<comment type="pathway">
    <text evidence="4">Glycan metabolism; cellulose degradation.</text>
</comment>
<comment type="subunit">
    <text evidence="4">Monomer. Homotrimer.</text>
</comment>
<comment type="biotechnology">
    <text evidence="4">Potential to be used for bioconversion of carbohydrates and biomass in industrial scale. Its high lactose decomposition activity makes it applicable for the removal of lactose from milk and dairy products in food industry. Has high activity in synthesizing galactooligosaccharides (GalOS), non-digestible prebiotic food ingredients, from lactose by transglycosylation. In this process its excellent thermostability mitigates microbial contamination. Has high ability in saccharification of lignocellulosic biomass such as steam-exploded corn stover. This enzyme may be a candidate for the production of biofuels and biochemicals.</text>
</comment>
<comment type="similarity">
    <text evidence="5">Belongs to the glycosyl hydrolase 1 family.</text>
</comment>
<reference evidence="7 8" key="1">
    <citation type="journal article" date="2011" name="J. Bacteriol.">
        <title>Complete genome sequences for the anaerobic, extremely thermophilic plant biomass-degrading bacteria Caldicellulosiruptor hydrothermalis, Caldicellulosiruptor kristjanssonii, Caldicellulosiruptor kronotskyensis, Caldicellulosiruptor owensenis, and Caldicellulosiruptor lactoaceticus.</title>
        <authorList>
            <person name="Blumer-Schuette S.E."/>
            <person name="Ozdemir I."/>
            <person name="Mistry D."/>
            <person name="Lucas S."/>
            <person name="Lapidus A."/>
            <person name="Cheng J.F."/>
            <person name="Goodwin L.A."/>
            <person name="Pitluck S."/>
            <person name="Land M.L."/>
            <person name="Hauser L.J."/>
            <person name="Woyke T."/>
            <person name="Mikhailova N."/>
            <person name="Pati A."/>
            <person name="Kyrpides N.C."/>
            <person name="Ivanova N."/>
            <person name="Detter J.C."/>
            <person name="Walston-Davenport K."/>
            <person name="Han S."/>
            <person name="Adams M.W."/>
            <person name="Kelly R.M."/>
        </authorList>
    </citation>
    <scope>NUCLEOTIDE SEQUENCE [LARGE SCALE GENOMIC DNA]</scope>
    <source>
        <strain evidence="8">ATCC 700167 / DSM 13100 / OL</strain>
    </source>
</reference>
<reference key="2">
    <citation type="journal article" date="2016" name="Biotechnol. Biofuels">
        <title>A multifunctional thermophilic glycoside hydrolase from Caldicellulosiruptor owensensis with potential applications in production of biofuels and biochemicals.</title>
        <authorList>
            <person name="Peng X."/>
            <person name="Su H."/>
            <person name="Mi S."/>
            <person name="Han Y."/>
        </authorList>
    </citation>
    <scope>FUNCTION</scope>
    <scope>CATALYTIC ACTIVITY</scope>
    <scope>SUBSTRATE SPECIFICITY</scope>
    <scope>ACTIVITY REGULATION</scope>
    <scope>BIOPHYSICOCHEMICAL PROPERTIES</scope>
    <scope>PATHWAY</scope>
    <scope>SUBUNIT</scope>
    <scope>BIOTECHNOLOGY</scope>
    <source>
        <strain evidence="6">ATCC 700167 / DSM 13100 / OL</strain>
    </source>
</reference>
<gene>
    <name evidence="6 7" type="ordered locus">Calow_0296</name>
</gene>
<organism evidence="7 8">
    <name type="scientific">Caldicellulosiruptor owensensis (strain ATCC 700167 / DSM 13100 / OL)</name>
    <dbReference type="NCBI Taxonomy" id="632518"/>
    <lineage>
        <taxon>Bacteria</taxon>
        <taxon>Bacillati</taxon>
        <taxon>Bacillota</taxon>
        <taxon>Bacillota incertae sedis</taxon>
        <taxon>Caldicellulosiruptorales</taxon>
        <taxon>Caldicellulosiruptoraceae</taxon>
        <taxon>Caldicellulosiruptor</taxon>
    </lineage>
</organism>
<protein>
    <recommendedName>
        <fullName evidence="6">Multifunctional glycoside hydrolase</fullName>
        <shortName evidence="6">Multifunctional GH</shortName>
        <ecNumber evidence="4">3.2.1.21</ecNumber>
        <ecNumber evidence="4">3.2.1.23</ecNumber>
        <ecNumber evidence="4">3.2.1.37</ecNumber>
        <ecNumber evidence="4">3.2.1.74</ecNumber>
        <ecNumber evidence="4">3.2.1.91</ecNumber>
    </recommendedName>
    <alternativeName>
        <fullName evidence="6">CoGH1A</fullName>
    </alternativeName>
</protein>
<evidence type="ECO:0000255" key="1">
    <source>
        <dbReference type="PIRSR" id="PIRSR617736-1"/>
    </source>
</evidence>
<evidence type="ECO:0000255" key="2">
    <source>
        <dbReference type="PIRSR" id="PIRSR617736-2"/>
    </source>
</evidence>
<evidence type="ECO:0000255" key="3">
    <source>
        <dbReference type="PROSITE-ProRule" id="PRU10055"/>
    </source>
</evidence>
<evidence type="ECO:0000269" key="4">
    <source>
    </source>
</evidence>
<evidence type="ECO:0000303" key="5">
    <source>
    </source>
</evidence>
<evidence type="ECO:0000303" key="6">
    <source>
    </source>
</evidence>
<evidence type="ECO:0000312" key="7">
    <source>
        <dbReference type="EMBL" id="ADQ03897.1"/>
    </source>
</evidence>
<evidence type="ECO:0000312" key="8">
    <source>
        <dbReference type="Proteomes" id="UP000006889"/>
    </source>
</evidence>
<sequence>MSFPKGFLWGAATASYQIEGAWNEDGKGESIWDRFTHQKGNILYGHNGDVACDHYHRHEEDVSLMKELGIKAYRFSTAWARIFPDGFGNINQKGLEFYDKLINELVENGIEPVVTLYHWDLPQKLQDIGGWANPEIVNYYFEYAMLIINRYKDKVKKWITFNEPYCIAFLGHWHGIHAPGIKNFKVAMDVVHNIMLSHFKVVKAVKENNIDVEIGITLNLTPVYLQTERLGYKVSEIEREMVNLSSQLDNELFLDPVLKGSYPQKLLDYLVQKDLLDSQKVNNMQQEVKENFIFPDFLGINYYTRSVRLYDENSGWIFPIRWEHPAGEYTEMGWEVFPQGLFDLLIWIKESYPQIPIYITENGAAYNDKVEDGRVHDQKRVEYLKQHFEAARKAIKNGVDLRGYFVWSLIDNFEWAMGYTKRFGIIYVDYETQKRIKKDSFYFYQQYIKENS</sequence>
<accession>E4Q361</accession>